<accession>Q14108</accession>
<accession>B4DKD8</accession>
<accession>E7EM68</accession>
<accession>Q53Y63</accession>
<name>SCRB2_HUMAN</name>
<sequence>MGRCCFYTAGTLSLLLLVTSVTLLVARVFQKAVDQSIEKKIVLRNGTEAFDSWEKPPLPVYTQFYFFNVTNPEEILRGETPRVEEVGPYTYRELRNKANIQFGDNGTTISAVSNKAYVFERDQSVGDPKIDLIRTLNIPVLTVIEWSQVHFLREIIEAMLKAYQQKLFVTHTVDELLWGYKDEILSLIHVFRPDISPYFGLFYEKNGTNDGDYVFLTGEDSYLNFTKIVEWNGKTSLDWWITDKCNMINGTDGDSFHPLITKDEVLYVFPSDFCRSVYITFSDYESVQGLPAFRYKVPAEILANTSDNAGFCIPEGNCLGSGVLNVSICKNGAPIIMSFPHFYQADERFVSAIEGMHPNQEDHETFVDINPLTGIILKAAKRFQINIYVKKLDDFVETGDIRTMVFPVMYLNESVHIDKETASRLKSMINTTLIITNIPYIIMALGVFFGLVFTWLACKGQGSMDEGTADERAPLIRT</sequence>
<keyword id="KW-0002">3D-structure</keyword>
<keyword id="KW-0025">Alternative splicing</keyword>
<keyword id="KW-0225">Disease variant</keyword>
<keyword id="KW-1015">Disulfide bond</keyword>
<keyword id="KW-0887">Epilepsy</keyword>
<keyword id="KW-0325">Glycoprotein</keyword>
<keyword id="KW-1183">Host cell receptor for virus entry</keyword>
<keyword id="KW-0945">Host-virus interaction</keyword>
<keyword id="KW-0458">Lysosome</keyword>
<keyword id="KW-0472">Membrane</keyword>
<keyword id="KW-0523">Neurodegeneration</keyword>
<keyword id="KW-1267">Proteomics identification</keyword>
<keyword id="KW-0675">Receptor</keyword>
<keyword id="KW-1185">Reference proteome</keyword>
<keyword id="KW-0812">Transmembrane</keyword>
<keyword id="KW-1133">Transmembrane helix</keyword>
<dbReference type="EMBL" id="D12676">
    <property type="protein sequence ID" value="BAA02177.1"/>
    <property type="molecule type" value="mRNA"/>
</dbReference>
<dbReference type="EMBL" id="BT006939">
    <property type="protein sequence ID" value="AAP35585.1"/>
    <property type="molecule type" value="mRNA"/>
</dbReference>
<dbReference type="EMBL" id="AK296519">
    <property type="protein sequence ID" value="BAG59150.1"/>
    <property type="molecule type" value="mRNA"/>
</dbReference>
<dbReference type="EMBL" id="AK313016">
    <property type="protein sequence ID" value="BAG35851.1"/>
    <property type="molecule type" value="mRNA"/>
</dbReference>
<dbReference type="EMBL" id="AC034139">
    <property type="status" value="NOT_ANNOTATED_CDS"/>
    <property type="molecule type" value="Genomic_DNA"/>
</dbReference>
<dbReference type="EMBL" id="AC110795">
    <property type="status" value="NOT_ANNOTATED_CDS"/>
    <property type="molecule type" value="Genomic_DNA"/>
</dbReference>
<dbReference type="EMBL" id="CH471057">
    <property type="protein sequence ID" value="EAX05779.1"/>
    <property type="molecule type" value="Genomic_DNA"/>
</dbReference>
<dbReference type="EMBL" id="BC021892">
    <property type="protein sequence ID" value="AAH21892.1"/>
    <property type="molecule type" value="mRNA"/>
</dbReference>
<dbReference type="CCDS" id="CCDS3577.1">
    <molecule id="Q14108-1"/>
</dbReference>
<dbReference type="CCDS" id="CCDS56335.1">
    <molecule id="Q14108-2"/>
</dbReference>
<dbReference type="PIR" id="A56525">
    <property type="entry name" value="A56525"/>
</dbReference>
<dbReference type="RefSeq" id="NP_001191184.1">
    <molecule id="Q14108-2"/>
    <property type="nucleotide sequence ID" value="NM_001204255.2"/>
</dbReference>
<dbReference type="RefSeq" id="NP_005497.1">
    <molecule id="Q14108-1"/>
    <property type="nucleotide sequence ID" value="NM_005506.4"/>
</dbReference>
<dbReference type="PDB" id="4F7B">
    <property type="method" value="X-ray"/>
    <property type="resolution" value="3.00 A"/>
    <property type="chains" value="A/B/C/D/E/F=35-430"/>
</dbReference>
<dbReference type="PDB" id="4Q4B">
    <property type="method" value="X-ray"/>
    <property type="resolution" value="2.82 A"/>
    <property type="chains" value="A=28-431"/>
</dbReference>
<dbReference type="PDB" id="4Q4F">
    <property type="method" value="X-ray"/>
    <property type="resolution" value="2.80 A"/>
    <property type="chains" value="A=28-432"/>
</dbReference>
<dbReference type="PDB" id="4TVZ">
    <property type="method" value="X-ray"/>
    <property type="resolution" value="3.01 A"/>
    <property type="chains" value="A/B=37-430"/>
</dbReference>
<dbReference type="PDB" id="4TW0">
    <property type="method" value="X-ray"/>
    <property type="resolution" value="3.65 A"/>
    <property type="chains" value="A/B/C/D=37-429"/>
</dbReference>
<dbReference type="PDB" id="4TW2">
    <property type="method" value="X-ray"/>
    <property type="resolution" value="2.89 A"/>
    <property type="chains" value="A/B=37-430"/>
</dbReference>
<dbReference type="PDB" id="5UPH">
    <property type="method" value="X-ray"/>
    <property type="resolution" value="3.00 A"/>
    <property type="chains" value="A/B=28-431"/>
</dbReference>
<dbReference type="PDB" id="5XBM">
    <property type="method" value="X-ray"/>
    <property type="resolution" value="3.50 A"/>
    <property type="chains" value="C/F=37-430"/>
</dbReference>
<dbReference type="PDB" id="6I2K">
    <property type="method" value="EM"/>
    <property type="resolution" value="3.40 A"/>
    <property type="chains" value="E=28-432"/>
</dbReference>
<dbReference type="PDBsum" id="4F7B"/>
<dbReference type="PDBsum" id="4Q4B"/>
<dbReference type="PDBsum" id="4Q4F"/>
<dbReference type="PDBsum" id="4TVZ"/>
<dbReference type="PDBsum" id="4TW0"/>
<dbReference type="PDBsum" id="4TW2"/>
<dbReference type="PDBsum" id="5UPH"/>
<dbReference type="PDBsum" id="5XBM"/>
<dbReference type="PDBsum" id="6I2K"/>
<dbReference type="EMDB" id="EMD-0332"/>
<dbReference type="SMR" id="Q14108"/>
<dbReference type="BioGRID" id="107388">
    <property type="interactions" value="203"/>
</dbReference>
<dbReference type="CORUM" id="Q14108"/>
<dbReference type="ELM" id="Q14108"/>
<dbReference type="FunCoup" id="Q14108">
    <property type="interactions" value="1006"/>
</dbReference>
<dbReference type="IntAct" id="Q14108">
    <property type="interactions" value="165"/>
</dbReference>
<dbReference type="MINT" id="Q14108"/>
<dbReference type="STRING" id="9606.ENSP00000264896"/>
<dbReference type="TCDB" id="9.B.39.1.13">
    <property type="family name" value="the long chain fatty acid translocase (lcfat) family"/>
</dbReference>
<dbReference type="GlyConnect" id="1479">
    <property type="glycosylation" value="41 N-Linked glycans (7 sites)"/>
</dbReference>
<dbReference type="GlyCosmos" id="Q14108">
    <property type="glycosylation" value="10 sites, 43 glycans"/>
</dbReference>
<dbReference type="GlyGen" id="Q14108">
    <property type="glycosylation" value="13 sites, 105 N-linked glycans (9 sites), 1 O-linked glycan (3 sites)"/>
</dbReference>
<dbReference type="iPTMnet" id="Q14108"/>
<dbReference type="PhosphoSitePlus" id="Q14108"/>
<dbReference type="SwissPalm" id="Q14108"/>
<dbReference type="BioMuta" id="SCARB2"/>
<dbReference type="DMDM" id="2498525"/>
<dbReference type="CPTAC" id="CPTAC-127"/>
<dbReference type="CPTAC" id="CPTAC-128"/>
<dbReference type="jPOST" id="Q14108"/>
<dbReference type="MassIVE" id="Q14108"/>
<dbReference type="PaxDb" id="9606-ENSP00000264896"/>
<dbReference type="PeptideAtlas" id="Q14108"/>
<dbReference type="ProteomicsDB" id="16872"/>
<dbReference type="ProteomicsDB" id="59816">
    <molecule id="Q14108-1"/>
</dbReference>
<dbReference type="Pumba" id="Q14108"/>
<dbReference type="ABCD" id="Q14108">
    <property type="antibodies" value="1 sequenced antibody"/>
</dbReference>
<dbReference type="Antibodypedia" id="3014">
    <property type="antibodies" value="422 antibodies from 37 providers"/>
</dbReference>
<dbReference type="DNASU" id="950"/>
<dbReference type="Ensembl" id="ENST00000264896.8">
    <molecule id="Q14108-1"/>
    <property type="protein sequence ID" value="ENSP00000264896.2"/>
    <property type="gene ID" value="ENSG00000138760.11"/>
</dbReference>
<dbReference type="Ensembl" id="ENST00000452464.6">
    <molecule id="Q14108-2"/>
    <property type="protein sequence ID" value="ENSP00000399154.2"/>
    <property type="gene ID" value="ENSG00000138760.11"/>
</dbReference>
<dbReference type="GeneID" id="950"/>
<dbReference type="KEGG" id="hsa:950"/>
<dbReference type="MANE-Select" id="ENST00000264896.8">
    <property type="protein sequence ID" value="ENSP00000264896.2"/>
    <property type="RefSeq nucleotide sequence ID" value="NM_005506.4"/>
    <property type="RefSeq protein sequence ID" value="NP_005497.1"/>
</dbReference>
<dbReference type="UCSC" id="uc003hju.3">
    <molecule id="Q14108-1"/>
    <property type="organism name" value="human"/>
</dbReference>
<dbReference type="AGR" id="HGNC:1665"/>
<dbReference type="CTD" id="950"/>
<dbReference type="DisGeNET" id="950"/>
<dbReference type="GeneCards" id="SCARB2"/>
<dbReference type="GeneReviews" id="SCARB2"/>
<dbReference type="HGNC" id="HGNC:1665">
    <property type="gene designation" value="SCARB2"/>
</dbReference>
<dbReference type="HPA" id="ENSG00000138760">
    <property type="expression patterns" value="Low tissue specificity"/>
</dbReference>
<dbReference type="MalaCards" id="SCARB2"/>
<dbReference type="MIM" id="254900">
    <property type="type" value="phenotype"/>
</dbReference>
<dbReference type="MIM" id="602257">
    <property type="type" value="gene"/>
</dbReference>
<dbReference type="neXtProt" id="NX_Q14108"/>
<dbReference type="OpenTargets" id="ENSG00000138760"/>
<dbReference type="Orphanet" id="163696">
    <property type="disease" value="Action myoclonus-renal failure syndrome"/>
</dbReference>
<dbReference type="Orphanet" id="77259">
    <property type="disease" value="Gaucher disease type 1"/>
</dbReference>
<dbReference type="Orphanet" id="308">
    <property type="disease" value="Progressive myoclonic epilepsy type 1"/>
</dbReference>
<dbReference type="PharmGKB" id="PA35038"/>
<dbReference type="VEuPathDB" id="HostDB:ENSG00000138760"/>
<dbReference type="eggNOG" id="KOG3776">
    <property type="taxonomic scope" value="Eukaryota"/>
</dbReference>
<dbReference type="GeneTree" id="ENSGT00940000153372"/>
<dbReference type="HOGENOM" id="CLU_019853_3_0_1"/>
<dbReference type="InParanoid" id="Q14108"/>
<dbReference type="OMA" id="HATHTVH"/>
<dbReference type="OrthoDB" id="18585at2759"/>
<dbReference type="PAN-GO" id="Q14108">
    <property type="GO annotations" value="6 GO annotations based on evolutionary models"/>
</dbReference>
<dbReference type="PhylomeDB" id="Q14108"/>
<dbReference type="TreeFam" id="TF317925"/>
<dbReference type="PathwayCommons" id="Q14108"/>
<dbReference type="Reactome" id="R-HSA-8856825">
    <property type="pathway name" value="Cargo recognition for clathrin-mediated endocytosis"/>
</dbReference>
<dbReference type="Reactome" id="R-HSA-8856828">
    <property type="pathway name" value="Clathrin-mediated endocytosis"/>
</dbReference>
<dbReference type="SignaLink" id="Q14108"/>
<dbReference type="BioGRID-ORCS" id="950">
    <property type="hits" value="16 hits in 1161 CRISPR screens"/>
</dbReference>
<dbReference type="ChiTaRS" id="SCARB2">
    <property type="organism name" value="human"/>
</dbReference>
<dbReference type="EvolutionaryTrace" id="Q14108"/>
<dbReference type="GeneWiki" id="SCARB2"/>
<dbReference type="GenomeRNAi" id="950"/>
<dbReference type="Pharos" id="Q14108">
    <property type="development level" value="Tbio"/>
</dbReference>
<dbReference type="PRO" id="PR:Q14108"/>
<dbReference type="Proteomes" id="UP000005640">
    <property type="component" value="Chromosome 4"/>
</dbReference>
<dbReference type="RNAct" id="Q14108">
    <property type="molecule type" value="protein"/>
</dbReference>
<dbReference type="Bgee" id="ENSG00000138760">
    <property type="expression patterns" value="Expressed in inferior vagus X ganglion and 214 other cell types or tissues"/>
</dbReference>
<dbReference type="ExpressionAtlas" id="Q14108">
    <property type="expression patterns" value="baseline and differential"/>
</dbReference>
<dbReference type="GO" id="GO:0030669">
    <property type="term" value="C:clathrin-coated endocytic vesicle membrane"/>
    <property type="evidence" value="ECO:0000304"/>
    <property type="project" value="Reactome"/>
</dbReference>
<dbReference type="GO" id="GO:0030666">
    <property type="term" value="C:endocytic vesicle membrane"/>
    <property type="evidence" value="ECO:0000250"/>
    <property type="project" value="ARUK-UCL"/>
</dbReference>
<dbReference type="GO" id="GO:0005789">
    <property type="term" value="C:endoplasmic reticulum membrane"/>
    <property type="evidence" value="ECO:0000304"/>
    <property type="project" value="ARUK-UCL"/>
</dbReference>
<dbReference type="GO" id="GO:0010008">
    <property type="term" value="C:endosome membrane"/>
    <property type="evidence" value="ECO:0000304"/>
    <property type="project" value="ARUK-UCL"/>
</dbReference>
<dbReference type="GO" id="GO:0070062">
    <property type="term" value="C:extracellular exosome"/>
    <property type="evidence" value="ECO:0007005"/>
    <property type="project" value="UniProtKB"/>
</dbReference>
<dbReference type="GO" id="GO:0005925">
    <property type="term" value="C:focal adhesion"/>
    <property type="evidence" value="ECO:0007005"/>
    <property type="project" value="UniProtKB"/>
</dbReference>
<dbReference type="GO" id="GO:0000139">
    <property type="term" value="C:Golgi membrane"/>
    <property type="evidence" value="ECO:0000304"/>
    <property type="project" value="ARUK-UCL"/>
</dbReference>
<dbReference type="GO" id="GO:0031902">
    <property type="term" value="C:late endosome membrane"/>
    <property type="evidence" value="ECO:0000304"/>
    <property type="project" value="ParkinsonsUK-UCL"/>
</dbReference>
<dbReference type="GO" id="GO:0043202">
    <property type="term" value="C:lysosomal lumen"/>
    <property type="evidence" value="ECO:0000250"/>
    <property type="project" value="BHF-UCL"/>
</dbReference>
<dbReference type="GO" id="GO:0005765">
    <property type="term" value="C:lysosomal membrane"/>
    <property type="evidence" value="ECO:0007005"/>
    <property type="project" value="UniProtKB"/>
</dbReference>
<dbReference type="GO" id="GO:0016020">
    <property type="term" value="C:membrane"/>
    <property type="evidence" value="ECO:0007005"/>
    <property type="project" value="UniProtKB"/>
</dbReference>
<dbReference type="GO" id="GO:0005886">
    <property type="term" value="C:plasma membrane"/>
    <property type="evidence" value="ECO:0000250"/>
    <property type="project" value="ARUK-UCL"/>
</dbReference>
<dbReference type="GO" id="GO:0038024">
    <property type="term" value="F:cargo receptor activity"/>
    <property type="evidence" value="ECO:0000315"/>
    <property type="project" value="ARUK-UCL"/>
</dbReference>
<dbReference type="GO" id="GO:0015485">
    <property type="term" value="F:cholesterol binding"/>
    <property type="evidence" value="ECO:0000250"/>
    <property type="project" value="ARUK-UCL"/>
</dbReference>
<dbReference type="GO" id="GO:0019899">
    <property type="term" value="F:enzyme binding"/>
    <property type="evidence" value="ECO:0000353"/>
    <property type="project" value="BHF-UCL"/>
</dbReference>
<dbReference type="GO" id="GO:0031210">
    <property type="term" value="F:phosphatidylcholine binding"/>
    <property type="evidence" value="ECO:0000250"/>
    <property type="project" value="ARUK-UCL"/>
</dbReference>
<dbReference type="GO" id="GO:0001786">
    <property type="term" value="F:phosphatidylserine binding"/>
    <property type="evidence" value="ECO:0000250"/>
    <property type="project" value="ARUK-UCL"/>
</dbReference>
<dbReference type="GO" id="GO:0042803">
    <property type="term" value="F:protein homodimerization activity"/>
    <property type="evidence" value="ECO:0000353"/>
    <property type="project" value="ARUK-UCL"/>
</dbReference>
<dbReference type="GO" id="GO:0051087">
    <property type="term" value="F:protein-folding chaperone binding"/>
    <property type="evidence" value="ECO:0007669"/>
    <property type="project" value="Ensembl"/>
</dbReference>
<dbReference type="GO" id="GO:0005044">
    <property type="term" value="F:scavenger receptor activity"/>
    <property type="evidence" value="ECO:0000250"/>
    <property type="project" value="ARUK-UCL"/>
</dbReference>
<dbReference type="GO" id="GO:0004888">
    <property type="term" value="F:transmembrane signaling receptor activity"/>
    <property type="evidence" value="ECO:0000304"/>
    <property type="project" value="ARUK-UCL"/>
</dbReference>
<dbReference type="GO" id="GO:0001618">
    <property type="term" value="F:virus receptor activity"/>
    <property type="evidence" value="ECO:0007669"/>
    <property type="project" value="UniProtKB-KW"/>
</dbReference>
<dbReference type="GO" id="GO:0015917">
    <property type="term" value="P:aminophospholipid transport"/>
    <property type="evidence" value="ECO:0000250"/>
    <property type="project" value="ARUK-UCL"/>
</dbReference>
<dbReference type="GO" id="GO:0099638">
    <property type="term" value="P:endosome to plasma membrane protein transport"/>
    <property type="evidence" value="ECO:0007669"/>
    <property type="project" value="Ensembl"/>
</dbReference>
<dbReference type="GO" id="GO:0010976">
    <property type="term" value="P:positive regulation of neuron projection development"/>
    <property type="evidence" value="ECO:0000250"/>
    <property type="project" value="ARUK-UCL"/>
</dbReference>
<dbReference type="GO" id="GO:0006622">
    <property type="term" value="P:protein targeting to lysosome"/>
    <property type="evidence" value="ECO:0000315"/>
    <property type="project" value="BHF-UCL"/>
</dbReference>
<dbReference type="GO" id="GO:0006898">
    <property type="term" value="P:receptor-mediated endocytosis"/>
    <property type="evidence" value="ECO:0000250"/>
    <property type="project" value="ARUK-UCL"/>
</dbReference>
<dbReference type="GO" id="GO:0043470">
    <property type="term" value="P:regulation of carbohydrate catabolic process"/>
    <property type="evidence" value="ECO:0000315"/>
    <property type="project" value="ARUK-UCL"/>
</dbReference>
<dbReference type="GO" id="GO:1904978">
    <property type="term" value="P:regulation of endosome organization"/>
    <property type="evidence" value="ECO:0000304"/>
    <property type="project" value="ParkinsonsUK-UCL"/>
</dbReference>
<dbReference type="GO" id="GO:2000752">
    <property type="term" value="P:regulation of glucosylceramide catabolic process"/>
    <property type="evidence" value="ECO:0000304"/>
    <property type="project" value="ARUK-UCL"/>
</dbReference>
<dbReference type="GO" id="GO:1905671">
    <property type="term" value="P:regulation of lysosome organization"/>
    <property type="evidence" value="ECO:0000304"/>
    <property type="project" value="ParkinsonsUK-UCL"/>
</dbReference>
<dbReference type="GO" id="GO:0007605">
    <property type="term" value="P:sensory perception of sound"/>
    <property type="evidence" value="ECO:0007669"/>
    <property type="project" value="Ensembl"/>
</dbReference>
<dbReference type="InterPro" id="IPR002159">
    <property type="entry name" value="CD36_fam"/>
</dbReference>
<dbReference type="InterPro" id="IPR005429">
    <property type="entry name" value="LimpII"/>
</dbReference>
<dbReference type="PANTHER" id="PTHR11923:SF51">
    <property type="entry name" value="LYSOSOME MEMBRANE PROTEIN 2"/>
    <property type="match status" value="1"/>
</dbReference>
<dbReference type="PANTHER" id="PTHR11923">
    <property type="entry name" value="SCAVENGER RECEPTOR CLASS B TYPE-1 SR-B1"/>
    <property type="match status" value="1"/>
</dbReference>
<dbReference type="Pfam" id="PF01130">
    <property type="entry name" value="CD36"/>
    <property type="match status" value="1"/>
</dbReference>
<dbReference type="PRINTS" id="PR01609">
    <property type="entry name" value="CD36FAMILY"/>
</dbReference>
<dbReference type="PRINTS" id="PR01611">
    <property type="entry name" value="LIMPII"/>
</dbReference>
<protein>
    <recommendedName>
        <fullName>Lysosome membrane protein 2</fullName>
    </recommendedName>
    <alternativeName>
        <fullName>85 kDa lysosomal membrane sialoglycoprotein</fullName>
        <shortName>LGP85</shortName>
    </alternativeName>
    <alternativeName>
        <fullName>CD36 antigen-like 2</fullName>
    </alternativeName>
    <alternativeName>
        <fullName>Lysosome membrane protein II</fullName>
        <shortName>LIMP II</shortName>
    </alternativeName>
    <alternativeName>
        <fullName>Scavenger receptor class B member 2</fullName>
    </alternativeName>
    <cdAntigenName>CD36</cdAntigenName>
</protein>
<comment type="function">
    <text evidence="5">Acts as a lysosomal receptor for glucosylceramidase (GBA1) targeting.</text>
</comment>
<comment type="function">
    <text evidence="10 14">(Microbial infection) Acts as a receptor for enterovirus 71.</text>
</comment>
<comment type="subunit">
    <text evidence="5 13">Interacts with GBA1.</text>
</comment>
<comment type="subunit">
    <text evidence="10 14">(Microbial infection) Interacts with enterovirus 71 capsid proteins VP1 and VP2.</text>
</comment>
<comment type="interaction">
    <interactant intactId="EBI-1564650">
        <id>Q14108</id>
    </interactant>
    <interactant intactId="EBI-12256978">
        <id>Q8N6F1-2</id>
        <label>CLDN19</label>
    </interactant>
    <organismsDiffer>false</organismsDiffer>
    <experiments>3</experiments>
</comment>
<comment type="interaction">
    <interactant intactId="EBI-1564650">
        <id>Q14108</id>
    </interactant>
    <interactant intactId="EBI-781551">
        <id>Q9Y282</id>
        <label>ERGIC3</label>
    </interactant>
    <organismsDiffer>false</organismsDiffer>
    <experiments>3</experiments>
</comment>
<comment type="interaction">
    <interactant intactId="EBI-1564650">
        <id>Q14108</id>
    </interactant>
    <interactant intactId="EBI-2927498">
        <id>O60883</id>
        <label>GPR37L1</label>
    </interactant>
    <organismsDiffer>false</organismsDiffer>
    <experiments>3</experiments>
</comment>
<comment type="interaction">
    <interactant intactId="EBI-1564650">
        <id>Q14108</id>
    </interactant>
    <interactant intactId="EBI-11721746">
        <id>Q8TED1</id>
        <label>GPX8</label>
    </interactant>
    <organismsDiffer>false</organismsDiffer>
    <experiments>3</experiments>
</comment>
<comment type="interaction">
    <interactant intactId="EBI-1564650">
        <id>Q14108</id>
    </interactant>
    <interactant intactId="EBI-11427100">
        <id>P31937</id>
        <label>HIBADH</label>
    </interactant>
    <organismsDiffer>false</organismsDiffer>
    <experiments>3</experiments>
</comment>
<comment type="interaction">
    <interactant intactId="EBI-1564650">
        <id>Q14108</id>
    </interactant>
    <interactant intactId="EBI-3267258">
        <id>Q86VI4</id>
        <label>LAPTM4B</label>
    </interactant>
    <organismsDiffer>false</organismsDiffer>
    <experiments>3</experiments>
</comment>
<comment type="interaction">
    <interactant intactId="EBI-1564650">
        <id>Q14108</id>
    </interactant>
    <interactant intactId="EBI-15853497">
        <id>Q9UBD6</id>
        <label>RHCG</label>
    </interactant>
    <organismsDiffer>false</organismsDiffer>
    <experiments>2</experiments>
</comment>
<comment type="subcellular location">
    <subcellularLocation>
        <location evidence="4 5 15">Lysosome membrane</location>
        <topology evidence="4 5 15">Multi-pass membrane protein</topology>
    </subcellularLocation>
</comment>
<comment type="alternative products">
    <event type="alternative splicing"/>
    <isoform>
        <id>Q14108-1</id>
        <name>1</name>
        <sequence type="displayed"/>
    </isoform>
    <isoform>
        <id>Q14108-2</id>
        <name>2</name>
        <sequence type="described" ref="VSP_044826"/>
    </isoform>
</comment>
<comment type="mass spectrometry"/>
<comment type="disease" evidence="6 7 9 11">
    <disease id="DI-01169">
        <name>Epilepsy, progressive myoclonic 4, with or without renal failure</name>
        <acronym>EPM4</acronym>
        <description>A form of progressive myoclonic epilepsy, a clinically and genetically heterogeneous group of disorders defined by the combination of action and reflex myoclonus, other types of epileptic seizures, and progressive neurodegeneration and neurocognitive impairment. EPM4 is an autosomal recessive form associated with renal failure in some cases. Cognitive function is preserved.</description>
        <dbReference type="MIM" id="254900"/>
    </disease>
    <text>The disease is caused by variants affecting the gene represented in this entry.</text>
</comment>
<comment type="disease">
    <text evidence="12">Genetic variants in SCARB2 can act as modifier of the phenotypic expression and severity of Gaucher disease.</text>
</comment>
<comment type="similarity">
    <text evidence="17">Belongs to the CD36 family.</text>
</comment>
<proteinExistence type="evidence at protein level"/>
<gene>
    <name type="primary">SCARB2</name>
    <name type="synonym">CD36L2</name>
    <name type="synonym">LIMP2</name>
    <name type="synonym">LIMPII</name>
</gene>
<organism>
    <name type="scientific">Homo sapiens</name>
    <name type="common">Human</name>
    <dbReference type="NCBI Taxonomy" id="9606"/>
    <lineage>
        <taxon>Eukaryota</taxon>
        <taxon>Metazoa</taxon>
        <taxon>Chordata</taxon>
        <taxon>Craniata</taxon>
        <taxon>Vertebrata</taxon>
        <taxon>Euteleostomi</taxon>
        <taxon>Mammalia</taxon>
        <taxon>Eutheria</taxon>
        <taxon>Euarchontoglires</taxon>
        <taxon>Primates</taxon>
        <taxon>Haplorrhini</taxon>
        <taxon>Catarrhini</taxon>
        <taxon>Hominidae</taxon>
        <taxon>Homo</taxon>
    </lineage>
</organism>
<reference key="1">
    <citation type="journal article" date="1992" name="Biochem. Biophys. Res. Commun.">
        <title>Isolation and sequencing of a cDNA clone encoding the 85 kDa human lysosomal sialoglycoprotein (hLGP85) in human metastatic pancreas islet tumor cells.</title>
        <authorList>
            <person name="Fujita H."/>
            <person name="Takata Y."/>
            <person name="Kono A."/>
            <person name="Tanaka Y."/>
            <person name="Takahashi T."/>
            <person name="Himeno M."/>
            <person name="Kato K."/>
        </authorList>
    </citation>
    <scope>NUCLEOTIDE SEQUENCE [MRNA] (ISOFORM 1)</scope>
</reference>
<reference key="2">
    <citation type="journal article" date="1995" name="Genomics">
        <title>The CD36, CLA-1 (CD36L1), and LIMPII (CD36L2) gene family: cellular distribution, chromosomal location, and genetic evolution.</title>
        <authorList>
            <person name="Calvo D."/>
            <person name="Dopazo J."/>
            <person name="Vega M.A."/>
        </authorList>
    </citation>
    <scope>NUCLEOTIDE SEQUENCE [MRNA] (ISOFORM 1)</scope>
</reference>
<reference key="3">
    <citation type="submission" date="2003-05" db="EMBL/GenBank/DDBJ databases">
        <title>Cloning of human full-length CDSs in BD Creator(TM) system donor vector.</title>
        <authorList>
            <person name="Kalnine N."/>
            <person name="Chen X."/>
            <person name="Rolfs A."/>
            <person name="Halleck A."/>
            <person name="Hines L."/>
            <person name="Eisenstein S."/>
            <person name="Koundinya M."/>
            <person name="Raphael J."/>
            <person name="Moreira D."/>
            <person name="Kelley T."/>
            <person name="LaBaer J."/>
            <person name="Lin Y."/>
            <person name="Phelan M."/>
            <person name="Farmer A."/>
        </authorList>
    </citation>
    <scope>NUCLEOTIDE SEQUENCE [LARGE SCALE MRNA] (ISOFORM 1)</scope>
</reference>
<reference key="4">
    <citation type="journal article" date="2004" name="Nat. Genet.">
        <title>Complete sequencing and characterization of 21,243 full-length human cDNAs.</title>
        <authorList>
            <person name="Ota T."/>
            <person name="Suzuki Y."/>
            <person name="Nishikawa T."/>
            <person name="Otsuki T."/>
            <person name="Sugiyama T."/>
            <person name="Irie R."/>
            <person name="Wakamatsu A."/>
            <person name="Hayashi K."/>
            <person name="Sato H."/>
            <person name="Nagai K."/>
            <person name="Kimura K."/>
            <person name="Makita H."/>
            <person name="Sekine M."/>
            <person name="Obayashi M."/>
            <person name="Nishi T."/>
            <person name="Shibahara T."/>
            <person name="Tanaka T."/>
            <person name="Ishii S."/>
            <person name="Yamamoto J."/>
            <person name="Saito K."/>
            <person name="Kawai Y."/>
            <person name="Isono Y."/>
            <person name="Nakamura Y."/>
            <person name="Nagahari K."/>
            <person name="Murakami K."/>
            <person name="Yasuda T."/>
            <person name="Iwayanagi T."/>
            <person name="Wagatsuma M."/>
            <person name="Shiratori A."/>
            <person name="Sudo H."/>
            <person name="Hosoiri T."/>
            <person name="Kaku Y."/>
            <person name="Kodaira H."/>
            <person name="Kondo H."/>
            <person name="Sugawara M."/>
            <person name="Takahashi M."/>
            <person name="Kanda K."/>
            <person name="Yokoi T."/>
            <person name="Furuya T."/>
            <person name="Kikkawa E."/>
            <person name="Omura Y."/>
            <person name="Abe K."/>
            <person name="Kamihara K."/>
            <person name="Katsuta N."/>
            <person name="Sato K."/>
            <person name="Tanikawa M."/>
            <person name="Yamazaki M."/>
            <person name="Ninomiya K."/>
            <person name="Ishibashi T."/>
            <person name="Yamashita H."/>
            <person name="Murakawa K."/>
            <person name="Fujimori K."/>
            <person name="Tanai H."/>
            <person name="Kimata M."/>
            <person name="Watanabe M."/>
            <person name="Hiraoka S."/>
            <person name="Chiba Y."/>
            <person name="Ishida S."/>
            <person name="Ono Y."/>
            <person name="Takiguchi S."/>
            <person name="Watanabe S."/>
            <person name="Yosida M."/>
            <person name="Hotuta T."/>
            <person name="Kusano J."/>
            <person name="Kanehori K."/>
            <person name="Takahashi-Fujii A."/>
            <person name="Hara H."/>
            <person name="Tanase T.-O."/>
            <person name="Nomura Y."/>
            <person name="Togiya S."/>
            <person name="Komai F."/>
            <person name="Hara R."/>
            <person name="Takeuchi K."/>
            <person name="Arita M."/>
            <person name="Imose N."/>
            <person name="Musashino K."/>
            <person name="Yuuki H."/>
            <person name="Oshima A."/>
            <person name="Sasaki N."/>
            <person name="Aotsuka S."/>
            <person name="Yoshikawa Y."/>
            <person name="Matsunawa H."/>
            <person name="Ichihara T."/>
            <person name="Shiohata N."/>
            <person name="Sano S."/>
            <person name="Moriya S."/>
            <person name="Momiyama H."/>
            <person name="Satoh N."/>
            <person name="Takami S."/>
            <person name="Terashima Y."/>
            <person name="Suzuki O."/>
            <person name="Nakagawa S."/>
            <person name="Senoh A."/>
            <person name="Mizoguchi H."/>
            <person name="Goto Y."/>
            <person name="Shimizu F."/>
            <person name="Wakebe H."/>
            <person name="Hishigaki H."/>
            <person name="Watanabe T."/>
            <person name="Sugiyama A."/>
            <person name="Takemoto M."/>
            <person name="Kawakami B."/>
            <person name="Yamazaki M."/>
            <person name="Watanabe K."/>
            <person name="Kumagai A."/>
            <person name="Itakura S."/>
            <person name="Fukuzumi Y."/>
            <person name="Fujimori Y."/>
            <person name="Komiyama M."/>
            <person name="Tashiro H."/>
            <person name="Tanigami A."/>
            <person name="Fujiwara T."/>
            <person name="Ono T."/>
            <person name="Yamada K."/>
            <person name="Fujii Y."/>
            <person name="Ozaki K."/>
            <person name="Hirao M."/>
            <person name="Ohmori Y."/>
            <person name="Kawabata A."/>
            <person name="Hikiji T."/>
            <person name="Kobatake N."/>
            <person name="Inagaki H."/>
            <person name="Ikema Y."/>
            <person name="Okamoto S."/>
            <person name="Okitani R."/>
            <person name="Kawakami T."/>
            <person name="Noguchi S."/>
            <person name="Itoh T."/>
            <person name="Shigeta K."/>
            <person name="Senba T."/>
            <person name="Matsumura K."/>
            <person name="Nakajima Y."/>
            <person name="Mizuno T."/>
            <person name="Morinaga M."/>
            <person name="Sasaki M."/>
            <person name="Togashi T."/>
            <person name="Oyama M."/>
            <person name="Hata H."/>
            <person name="Watanabe M."/>
            <person name="Komatsu T."/>
            <person name="Mizushima-Sugano J."/>
            <person name="Satoh T."/>
            <person name="Shirai Y."/>
            <person name="Takahashi Y."/>
            <person name="Nakagawa K."/>
            <person name="Okumura K."/>
            <person name="Nagase T."/>
            <person name="Nomura N."/>
            <person name="Kikuchi H."/>
            <person name="Masuho Y."/>
            <person name="Yamashita R."/>
            <person name="Nakai K."/>
            <person name="Yada T."/>
            <person name="Nakamura Y."/>
            <person name="Ohara O."/>
            <person name="Isogai T."/>
            <person name="Sugano S."/>
        </authorList>
    </citation>
    <scope>NUCLEOTIDE SEQUENCE [LARGE SCALE MRNA] (ISOFORMS 1 AND 2)</scope>
    <source>
        <tissue>Cerebellum</tissue>
        <tissue>Thalamus</tissue>
    </source>
</reference>
<reference key="5">
    <citation type="journal article" date="2005" name="Nature">
        <title>Generation and annotation of the DNA sequences of human chromosomes 2 and 4.</title>
        <authorList>
            <person name="Hillier L.W."/>
            <person name="Graves T.A."/>
            <person name="Fulton R.S."/>
            <person name="Fulton L.A."/>
            <person name="Pepin K.H."/>
            <person name="Minx P."/>
            <person name="Wagner-McPherson C."/>
            <person name="Layman D."/>
            <person name="Wylie K."/>
            <person name="Sekhon M."/>
            <person name="Becker M.C."/>
            <person name="Fewell G.A."/>
            <person name="Delehaunty K.D."/>
            <person name="Miner T.L."/>
            <person name="Nash W.E."/>
            <person name="Kremitzki C."/>
            <person name="Oddy L."/>
            <person name="Du H."/>
            <person name="Sun H."/>
            <person name="Bradshaw-Cordum H."/>
            <person name="Ali J."/>
            <person name="Carter J."/>
            <person name="Cordes M."/>
            <person name="Harris A."/>
            <person name="Isak A."/>
            <person name="van Brunt A."/>
            <person name="Nguyen C."/>
            <person name="Du F."/>
            <person name="Courtney L."/>
            <person name="Kalicki J."/>
            <person name="Ozersky P."/>
            <person name="Abbott S."/>
            <person name="Armstrong J."/>
            <person name="Belter E.A."/>
            <person name="Caruso L."/>
            <person name="Cedroni M."/>
            <person name="Cotton M."/>
            <person name="Davidson T."/>
            <person name="Desai A."/>
            <person name="Elliott G."/>
            <person name="Erb T."/>
            <person name="Fronick C."/>
            <person name="Gaige T."/>
            <person name="Haakenson W."/>
            <person name="Haglund K."/>
            <person name="Holmes A."/>
            <person name="Harkins R."/>
            <person name="Kim K."/>
            <person name="Kruchowski S.S."/>
            <person name="Strong C.M."/>
            <person name="Grewal N."/>
            <person name="Goyea E."/>
            <person name="Hou S."/>
            <person name="Levy A."/>
            <person name="Martinka S."/>
            <person name="Mead K."/>
            <person name="McLellan M.D."/>
            <person name="Meyer R."/>
            <person name="Randall-Maher J."/>
            <person name="Tomlinson C."/>
            <person name="Dauphin-Kohlberg S."/>
            <person name="Kozlowicz-Reilly A."/>
            <person name="Shah N."/>
            <person name="Swearengen-Shahid S."/>
            <person name="Snider J."/>
            <person name="Strong J.T."/>
            <person name="Thompson J."/>
            <person name="Yoakum M."/>
            <person name="Leonard S."/>
            <person name="Pearman C."/>
            <person name="Trani L."/>
            <person name="Radionenko M."/>
            <person name="Waligorski J.E."/>
            <person name="Wang C."/>
            <person name="Rock S.M."/>
            <person name="Tin-Wollam A.-M."/>
            <person name="Maupin R."/>
            <person name="Latreille P."/>
            <person name="Wendl M.C."/>
            <person name="Yang S.-P."/>
            <person name="Pohl C."/>
            <person name="Wallis J.W."/>
            <person name="Spieth J."/>
            <person name="Bieri T.A."/>
            <person name="Berkowicz N."/>
            <person name="Nelson J.O."/>
            <person name="Osborne J."/>
            <person name="Ding L."/>
            <person name="Meyer R."/>
            <person name="Sabo A."/>
            <person name="Shotland Y."/>
            <person name="Sinha P."/>
            <person name="Wohldmann P.E."/>
            <person name="Cook L.L."/>
            <person name="Hickenbotham M.T."/>
            <person name="Eldred J."/>
            <person name="Williams D."/>
            <person name="Jones T.A."/>
            <person name="She X."/>
            <person name="Ciccarelli F.D."/>
            <person name="Izaurralde E."/>
            <person name="Taylor J."/>
            <person name="Schmutz J."/>
            <person name="Myers R.M."/>
            <person name="Cox D.R."/>
            <person name="Huang X."/>
            <person name="McPherson J.D."/>
            <person name="Mardis E.R."/>
            <person name="Clifton S.W."/>
            <person name="Warren W.C."/>
            <person name="Chinwalla A.T."/>
            <person name="Eddy S.R."/>
            <person name="Marra M.A."/>
            <person name="Ovcharenko I."/>
            <person name="Furey T.S."/>
            <person name="Miller W."/>
            <person name="Eichler E.E."/>
            <person name="Bork P."/>
            <person name="Suyama M."/>
            <person name="Torrents D."/>
            <person name="Waterston R.H."/>
            <person name="Wilson R.K."/>
        </authorList>
    </citation>
    <scope>NUCLEOTIDE SEQUENCE [LARGE SCALE GENOMIC DNA]</scope>
</reference>
<reference key="6">
    <citation type="submission" date="2005-07" db="EMBL/GenBank/DDBJ databases">
        <authorList>
            <person name="Mural R.J."/>
            <person name="Istrail S."/>
            <person name="Sutton G."/>
            <person name="Florea L."/>
            <person name="Halpern A.L."/>
            <person name="Mobarry C.M."/>
            <person name="Lippert R."/>
            <person name="Walenz B."/>
            <person name="Shatkay H."/>
            <person name="Dew I."/>
            <person name="Miller J.R."/>
            <person name="Flanigan M.J."/>
            <person name="Edwards N.J."/>
            <person name="Bolanos R."/>
            <person name="Fasulo D."/>
            <person name="Halldorsson B.V."/>
            <person name="Hannenhalli S."/>
            <person name="Turner R."/>
            <person name="Yooseph S."/>
            <person name="Lu F."/>
            <person name="Nusskern D.R."/>
            <person name="Shue B.C."/>
            <person name="Zheng X.H."/>
            <person name="Zhong F."/>
            <person name="Delcher A.L."/>
            <person name="Huson D.H."/>
            <person name="Kravitz S.A."/>
            <person name="Mouchard L."/>
            <person name="Reinert K."/>
            <person name="Remington K.A."/>
            <person name="Clark A.G."/>
            <person name="Waterman M.S."/>
            <person name="Eichler E.E."/>
            <person name="Adams M.D."/>
            <person name="Hunkapiller M.W."/>
            <person name="Myers E.W."/>
            <person name="Venter J.C."/>
        </authorList>
    </citation>
    <scope>NUCLEOTIDE SEQUENCE [LARGE SCALE GENOMIC DNA]</scope>
</reference>
<reference key="7">
    <citation type="journal article" date="2004" name="Genome Res.">
        <title>The status, quality, and expansion of the NIH full-length cDNA project: the Mammalian Gene Collection (MGC).</title>
        <authorList>
            <consortium name="The MGC Project Team"/>
        </authorList>
    </citation>
    <scope>NUCLEOTIDE SEQUENCE [LARGE SCALE MRNA] (ISOFORM 1)</scope>
    <source>
        <tissue>Eye</tissue>
    </source>
</reference>
<reference key="8">
    <citation type="journal article" date="1994" name="J. Biol. Chem.">
        <title>The residues Leu(Ile)475-Ile(Leu, Val, Ala)476, contained in the extended carboxyl cytoplasmic tail, are critical for targeting of the resident lysosomal membrane protein LIMP II to lysosomes.</title>
        <authorList>
            <person name="Sandoval I.V."/>
            <person name="Arredondo J.J."/>
            <person name="Alcalde J."/>
            <person name="Gonzalez Noriega A."/>
            <person name="Vandekerckhove J."/>
            <person name="Jimenez M.A."/>
            <person name="Rico M."/>
        </authorList>
    </citation>
    <scope>MUTAGENESIS OF LEU-475; ILE-476; ARG-477 AND THR-478</scope>
    <scope>SUBCELLULAR LOCATION</scope>
</reference>
<reference key="9">
    <citation type="journal article" date="2002" name="Proteomics">
        <title>Cluster analysis of an extensive human breast cancer cell line protein expression map database.</title>
        <authorList>
            <person name="Harris R.A."/>
            <person name="Yang A."/>
            <person name="Stein R.C."/>
            <person name="Lucy K."/>
            <person name="Brusten L."/>
            <person name="Herath A."/>
            <person name="Parekh R."/>
            <person name="Waterfield M.D."/>
            <person name="O'Hare M.J."/>
            <person name="Neville M.A."/>
            <person name="Page M.J."/>
            <person name="Zvelebil M.J."/>
        </authorList>
    </citation>
    <scope>MASS SPECTROMETRY</scope>
    <source>
        <tissue>Mammary cancer</tissue>
    </source>
</reference>
<reference key="10">
    <citation type="journal article" date="2003" name="Nat. Biotechnol.">
        <title>Identification and quantification of N-linked glycoproteins using hydrazide chemistry, stable isotope labeling and mass spectrometry.</title>
        <authorList>
            <person name="Zhang H."/>
            <person name="Li X.-J."/>
            <person name="Martin D.B."/>
            <person name="Aebersold R."/>
        </authorList>
    </citation>
    <scope>GLYCOSYLATION AT ASN-249 AND ASN-412</scope>
</reference>
<reference key="11">
    <citation type="journal article" date="2007" name="Cell">
        <title>LIMP-2 is a receptor for lysosomal mannose-6-phosphate-independent targeting of beta-glucocerebrosidase.</title>
        <authorList>
            <person name="Reczek D."/>
            <person name="Schwake M."/>
            <person name="Schroder J."/>
            <person name="Hughes H."/>
            <person name="Blanz J."/>
            <person name="Jin X."/>
            <person name="Brondyk W."/>
            <person name="Van Patten S."/>
            <person name="Edmunds T."/>
            <person name="Saftig P."/>
        </authorList>
    </citation>
    <scope>FUNCTION</scope>
    <scope>SUBCELLULAR LOCATION</scope>
    <scope>REGION</scope>
    <scope>INTERACTION WITH GBA1</scope>
</reference>
<reference key="12">
    <citation type="journal article" date="2007" name="Traffic">
        <title>Integral and associated lysosomal membrane proteins.</title>
        <authorList>
            <person name="Schroeder B."/>
            <person name="Wrocklage C."/>
            <person name="Pan C."/>
            <person name="Jaeger R."/>
            <person name="Koesters B."/>
            <person name="Schaefer H."/>
            <person name="Elsaesser H.-P."/>
            <person name="Mann M."/>
            <person name="Hasilik A."/>
        </authorList>
    </citation>
    <scope>SUBCELLULAR LOCATION [LARGE SCALE ANALYSIS]</scope>
    <source>
        <tissue>Placenta</tissue>
    </source>
</reference>
<reference key="13">
    <citation type="journal article" date="2008" name="Am. J. Hum. Genet.">
        <title>Array-based gene discovery with three unrelated subjects shows SCARB2/LIMP-2 deficiency causes myoclonus epilepsy and glomerulosclerosis.</title>
        <authorList>
            <person name="Berkovic S.F."/>
            <person name="Dibbens L.M."/>
            <person name="Oshlack A."/>
            <person name="Silver J.D."/>
            <person name="Katerelos M."/>
            <person name="Vears D.F."/>
            <person name="Luellmann-Rauch R."/>
            <person name="Blanz J."/>
            <person name="Zhang K.W."/>
            <person name="Stankovich J."/>
            <person name="Kalnins R.M."/>
            <person name="Dowling J.P."/>
            <person name="Andermann E."/>
            <person name="Andermann F."/>
            <person name="Faldini E."/>
            <person name="D'Hooge R."/>
            <person name="Vadlamudi L."/>
            <person name="Macdonell R.A."/>
            <person name="Hodgson B.L."/>
            <person name="Bayly M.A."/>
            <person name="Savige J."/>
            <person name="Mulley J.C."/>
            <person name="Smyth G.K."/>
            <person name="Power D.A."/>
            <person name="Saftig P."/>
            <person name="Bahlo M."/>
        </authorList>
    </citation>
    <scope>INVOLVEMENT IN EPM4</scope>
</reference>
<reference key="14">
    <citation type="journal article" date="2008" name="Hum. Mol. Genet.">
        <title>A nonsense mutation in the LIMP-2 gene associated with progressive myoclonic epilepsy and nephrotic syndrome.</title>
        <authorList>
            <person name="Balreira A."/>
            <person name="Gaspar P."/>
            <person name="Caiola D."/>
            <person name="Chaves J."/>
            <person name="Beirao I."/>
            <person name="Lima J.L."/>
            <person name="Azevedo J.E."/>
            <person name="Miranda M.C."/>
        </authorList>
    </citation>
    <scope>INVOLVEMENT IN EPM4</scope>
</reference>
<reference key="15">
    <citation type="journal article" date="2009" name="J. Proteome Res.">
        <title>Glycoproteomics analysis of human liver tissue by combination of multiple enzyme digestion and hydrazide chemistry.</title>
        <authorList>
            <person name="Chen R."/>
            <person name="Jiang X."/>
            <person name="Sun D."/>
            <person name="Han G."/>
            <person name="Wang F."/>
            <person name="Ye M."/>
            <person name="Wang L."/>
            <person name="Zou H."/>
        </authorList>
    </citation>
    <scope>GLYCOSYLATION [LARGE SCALE ANALYSIS] AT ASN-45; ASN-68; ASN-105; ASN-206; ASN-249; ASN-304 AND ASN-325</scope>
    <source>
        <tissue>Liver</tissue>
    </source>
</reference>
<reference key="16">
    <citation type="journal article" date="2009" name="Nat. Med.">
        <title>Scavenger receptor B2 is a cellular receptor for enterovirus 71.</title>
        <authorList>
            <person name="Yamayoshi S."/>
            <person name="Yamashita Y."/>
            <person name="Li J."/>
            <person name="Hanagata N."/>
            <person name="Minowa T."/>
            <person name="Takemura T."/>
            <person name="Koike S."/>
        </authorList>
    </citation>
    <scope>FUNCTION (MICROBIAL INFECTION)</scope>
    <scope>INTERACTION WITH HOST ENTEROVIRUS 71 CAPSID PROTEIN VP1 AND VP2 (MICROBIAL INFECTION)</scope>
</reference>
<reference key="17">
    <citation type="journal article" date="2011" name="Arch. Neurol.">
        <title>Mutation of SCARB2 in a patient with progressive myoclonus epilepsy and demyelinating peripheral neuropathy.</title>
        <authorList>
            <person name="Dibbens L.M."/>
            <person name="Karakis I."/>
            <person name="Bayly M.A."/>
            <person name="Costello D.J."/>
            <person name="Cole A.J."/>
            <person name="Berkovic S.F."/>
        </authorList>
    </citation>
    <scope>INVOLVEMENT IN EPM4</scope>
</reference>
<reference key="18">
    <citation type="journal article" date="2011" name="BMC Syst. Biol.">
        <title>Initial characterization of the human central proteome.</title>
        <authorList>
            <person name="Burkard T.R."/>
            <person name="Planyavsky M."/>
            <person name="Kaupe I."/>
            <person name="Breitwieser F.P."/>
            <person name="Buerckstuemmer T."/>
            <person name="Bennett K.L."/>
            <person name="Superti-Furga G."/>
            <person name="Colinge J."/>
        </authorList>
    </citation>
    <scope>IDENTIFICATION BY MASS SPECTROMETRY [LARGE SCALE ANALYSIS]</scope>
</reference>
<reference key="19">
    <citation type="journal article" date="2011" name="Hum. Mutat.">
        <title>A mutation in SCARB2 is a modifier in Gaucher disease.</title>
        <authorList>
            <person name="Velayati A."/>
            <person name="DePaolo J."/>
            <person name="Gupta N."/>
            <person name="Choi J.H."/>
            <person name="Moaven N."/>
            <person name="Westbroek W."/>
            <person name="Goker-Alpan O."/>
            <person name="Goldin E."/>
            <person name="Stubblefield B.K."/>
            <person name="Kolodny E."/>
            <person name="Tayebi N."/>
            <person name="Sidransky E."/>
        </authorList>
    </citation>
    <scope>INVOLVEMENT IN GAUCHER DISEASE AS MODIFIER GENE</scope>
    <scope>VARIANT GLY-471</scope>
</reference>
<reference key="20">
    <citation type="journal article" date="2014" name="J. Proteomics">
        <title>An enzyme assisted RP-RPLC approach for in-depth analysis of human liver phosphoproteome.</title>
        <authorList>
            <person name="Bian Y."/>
            <person name="Song C."/>
            <person name="Cheng K."/>
            <person name="Dong M."/>
            <person name="Wang F."/>
            <person name="Huang J."/>
            <person name="Sun D."/>
            <person name="Wang L."/>
            <person name="Ye M."/>
            <person name="Zou H."/>
        </authorList>
    </citation>
    <scope>IDENTIFICATION BY MASS SPECTROMETRY [LARGE SCALE ANALYSIS]</scope>
    <source>
        <tissue>Liver</tissue>
    </source>
</reference>
<reference key="21">
    <citation type="journal article" date="2015" name="Proteomics">
        <title>N-terminome analysis of the human mitochondrial proteome.</title>
        <authorList>
            <person name="Vaca Jacome A.S."/>
            <person name="Rabilloud T."/>
            <person name="Schaeffer-Reiss C."/>
            <person name="Rompais M."/>
            <person name="Ayoub D."/>
            <person name="Lane L."/>
            <person name="Bairoch A."/>
            <person name="Van Dorsselaer A."/>
            <person name="Carapito C."/>
        </authorList>
    </citation>
    <scope>IDENTIFICATION BY MASS SPECTROMETRY [LARGE SCALE ANALYSIS]</scope>
</reference>
<reference evidence="18" key="22">
    <citation type="journal article" date="2019" name="Nat. Microbiol.">
        <title>Unexpected mode of engagement between enterovirus 71 and its receptor SCARB2.</title>
        <authorList>
            <person name="Zhou D."/>
            <person name="Zhao Y."/>
            <person name="Kotecha A."/>
            <person name="Fry E.E."/>
            <person name="Kelly J.T."/>
            <person name="Wang X."/>
            <person name="Rao Z."/>
            <person name="Rowlands D.J."/>
            <person name="Ren J."/>
            <person name="Stuart D.I."/>
        </authorList>
    </citation>
    <scope>FUNCTION (MICROBIAL INFECTION)</scope>
    <scope>INTERACTION WITH HOST ENTEROVIRUS 71 CAPSID PROTEIN VP1 AND VP2 (MICROBIAL INFECTION)</scope>
</reference>
<reference key="23">
    <citation type="journal article" date="2013" name="Nature">
        <title>Structure of LIMP-2 provides functional insights with implications for SR-BI and CD36.</title>
        <authorList>
            <person name="Neculai D."/>
            <person name="Schwake M."/>
            <person name="Ravichandran M."/>
            <person name="Zunke F."/>
            <person name="Collins R.F."/>
            <person name="Peters J."/>
            <person name="Neculai M."/>
            <person name="Plumb J."/>
            <person name="Loppnau P."/>
            <person name="Pizarro J.C."/>
            <person name="Seitova A."/>
            <person name="Trimble W.S."/>
            <person name="Saftig P."/>
            <person name="Grinstein S."/>
            <person name="Dhe-Paganon S."/>
        </authorList>
    </citation>
    <scope>X-RAY CRYSTALLOGRAPHY (3.00 ANGSTROMS) OF 35-430</scope>
    <scope>DISULFIDE BOND</scope>
    <scope>GLYCOSYLATION AT ASN-45; ASN-68; ASN-206; ASN-224; ASN-249; ASN-304; ASN-325 AND ASN-412</scope>
    <scope>INTERACTION WITH GBA1</scope>
</reference>
<reference key="24">
    <citation type="journal article" date="2009" name="Mol. Genet. Metab.">
        <title>Biochemical and molecular findings in a patient with myoclonic epilepsy due to a mistarget of the beta-glucosidase enzyme.</title>
        <authorList>
            <person name="Dardis A."/>
            <person name="Filocamo M."/>
            <person name="Grossi S."/>
            <person name="Ciana G."/>
            <person name="Franceschetti S."/>
            <person name="Dominissini S."/>
            <person name="Rubboli G."/>
            <person name="Di Rocco M."/>
            <person name="Bembi B."/>
        </authorList>
    </citation>
    <scope>VARIANT EPM4 ASN-363</scope>
</reference>
<feature type="chain" id="PRO_0000144155" description="Lysosome membrane protein 2">
    <location>
        <begin position="1"/>
        <end position="478"/>
    </location>
</feature>
<feature type="topological domain" description="Cytoplasmic" evidence="1">
    <location>
        <begin position="1"/>
        <end position="4"/>
    </location>
</feature>
<feature type="transmembrane region" description="Helical" evidence="1">
    <location>
        <begin position="5"/>
        <end position="27"/>
    </location>
</feature>
<feature type="topological domain" description="Lumenal" evidence="1">
    <location>
        <begin position="28"/>
        <end position="433"/>
    </location>
</feature>
<feature type="transmembrane region" description="Helical" evidence="1">
    <location>
        <begin position="434"/>
        <end position="459"/>
    </location>
</feature>
<feature type="topological domain" description="Cytoplasmic" evidence="1">
    <location>
        <begin position="460"/>
        <end position="478"/>
    </location>
</feature>
<feature type="region of interest" description="Important for interaction with GBA1">
    <location>
        <begin position="155"/>
        <end position="191"/>
    </location>
</feature>
<feature type="glycosylation site" description="N-linked (GlcNAc...) asparagine" evidence="8 13">
    <location>
        <position position="45"/>
    </location>
</feature>
<feature type="glycosylation site" description="N-linked (GlcNAc...) asparagine" evidence="8 13">
    <location>
        <position position="68"/>
    </location>
</feature>
<feature type="glycosylation site" description="N-linked (GlcNAc...) asparagine" evidence="8">
    <location>
        <position position="105"/>
    </location>
</feature>
<feature type="glycosylation site" description="N-linked (GlcNAc...) asparagine" evidence="8 13">
    <location>
        <position position="206"/>
    </location>
</feature>
<feature type="glycosylation site" description="N-linked (GlcNAc...) asparagine" evidence="13">
    <location>
        <position position="224"/>
    </location>
</feature>
<feature type="glycosylation site" description="N-linked (GlcNAc...) asparagine" evidence="3 8 13">
    <location>
        <position position="249"/>
    </location>
</feature>
<feature type="glycosylation site" description="N-linked (GlcNAc...) asparagine" evidence="8 13">
    <location>
        <position position="304"/>
    </location>
</feature>
<feature type="glycosylation site" description="N-linked (GlcNAc...) asparagine" evidence="8 13">
    <location>
        <position position="325"/>
    </location>
</feature>
<feature type="glycosylation site" description="N-linked (GlcNAc...) asparagine" evidence="3 13">
    <location>
        <position position="412"/>
    </location>
</feature>
<feature type="glycosylation site" description="N-linked (GlcNAc...) asparagine" evidence="1">
    <location>
        <position position="430"/>
    </location>
</feature>
<feature type="disulfide bond" evidence="13">
    <location>
        <begin position="274"/>
        <end position="329"/>
    </location>
</feature>
<feature type="disulfide bond" evidence="13">
    <location>
        <begin position="312"/>
        <end position="318"/>
    </location>
</feature>
<feature type="splice variant" id="VSP_044826" description="In isoform 2." evidence="16">
    <location>
        <begin position="93"/>
        <end position="235"/>
    </location>
</feature>
<feature type="sequence variant" id="VAR_066744" description="In EPM4; no renal failure; dbSNP:rs758857853." evidence="9">
    <original>H</original>
    <variation>N</variation>
    <location>
        <position position="363"/>
    </location>
</feature>
<feature type="sequence variant" id="VAR_066745" description="May act as a modifier of Gaucher disease; dbSNP:rs755903502." evidence="12">
    <original>E</original>
    <variation>G</variation>
    <location>
        <position position="471"/>
    </location>
</feature>
<feature type="mutagenesis site" description="Prevents the targeting of the protein to lysosomes." evidence="15">
    <original>L</original>
    <variation>A</variation>
    <variation>G</variation>
    <variation>D</variation>
    <variation>V</variation>
    <location>
        <position position="475"/>
    </location>
</feature>
<feature type="mutagenesis site" description="Some loss in the efficiency of targeting of the protein to lysosomes." evidence="15">
    <original>L</original>
    <variation>I</variation>
    <location>
        <position position="475"/>
    </location>
</feature>
<feature type="mutagenesis site" description="Does not prevent the targeting of the protein to lysosomes completely." evidence="15">
    <original>I</original>
    <variation>A</variation>
    <variation>V</variation>
    <location>
        <position position="476"/>
    </location>
</feature>
<feature type="mutagenesis site" description="Prevents the targeting of the protein to lysosomes." evidence="15">
    <original>I</original>
    <variation>D</variation>
    <variation>E</variation>
    <variation>G</variation>
    <location>
        <position position="476"/>
    </location>
</feature>
<feature type="mutagenesis site" description="Normal targeting of the protein to lysosomes." evidence="15">
    <original>I</original>
    <variation>L</variation>
    <location>
        <position position="476"/>
    </location>
</feature>
<feature type="mutagenesis site" description="Normal targeting of the protein to lysosomes." evidence="15">
    <original>R</original>
    <variation>A</variation>
    <variation>E</variation>
    <variation>G</variation>
    <variation>K</variation>
    <variation>Q</variation>
    <location>
        <position position="477"/>
    </location>
</feature>
<feature type="mutagenesis site" description="Normal targeting of the protein to lysosomes." evidence="15">
    <original>T</original>
    <variation>G</variation>
    <variation>I</variation>
    <variation>S</variation>
    <variation>V</variation>
    <location>
        <position position="478"/>
    </location>
</feature>
<feature type="sequence conflict" description="In Ref. 4; BAG59150." evidence="17" ref="4">
    <original>S</original>
    <variation>P</variation>
    <location>
        <position position="351"/>
    </location>
</feature>
<feature type="helix" evidence="19">
    <location>
        <begin position="38"/>
        <end position="40"/>
    </location>
</feature>
<feature type="helix" evidence="20">
    <location>
        <begin position="48"/>
        <end position="54"/>
    </location>
</feature>
<feature type="strand" evidence="20">
    <location>
        <begin position="60"/>
        <end position="70"/>
    </location>
</feature>
<feature type="helix" evidence="20">
    <location>
        <begin position="72"/>
        <end position="76"/>
    </location>
</feature>
<feature type="strand" evidence="20">
    <location>
        <begin position="82"/>
        <end position="103"/>
    </location>
</feature>
<feature type="turn" evidence="20">
    <location>
        <begin position="104"/>
        <end position="107"/>
    </location>
</feature>
<feature type="strand" evidence="20">
    <location>
        <begin position="108"/>
        <end position="119"/>
    </location>
</feature>
<feature type="helix" evidence="20">
    <location>
        <begin position="121"/>
        <end position="123"/>
    </location>
</feature>
<feature type="strand" evidence="20">
    <location>
        <begin position="124"/>
        <end position="126"/>
    </location>
</feature>
<feature type="turn" evidence="20">
    <location>
        <begin position="128"/>
        <end position="130"/>
    </location>
</feature>
<feature type="strand" evidence="20">
    <location>
        <begin position="132"/>
        <end position="136"/>
    </location>
</feature>
<feature type="helix" evidence="20">
    <location>
        <begin position="138"/>
        <end position="148"/>
    </location>
</feature>
<feature type="helix" evidence="20">
    <location>
        <begin position="153"/>
        <end position="162"/>
    </location>
</feature>
<feature type="strand" evidence="20">
    <location>
        <begin position="167"/>
        <end position="172"/>
    </location>
</feature>
<feature type="helix" evidence="20">
    <location>
        <begin position="173"/>
        <end position="178"/>
    </location>
</feature>
<feature type="helix" evidence="20">
    <location>
        <begin position="183"/>
        <end position="191"/>
    </location>
</feature>
<feature type="strand" evidence="20">
    <location>
        <begin position="197"/>
        <end position="199"/>
    </location>
</feature>
<feature type="turn" evidence="20">
    <location>
        <begin position="201"/>
        <end position="204"/>
    </location>
</feature>
<feature type="strand" evidence="20">
    <location>
        <begin position="213"/>
        <end position="216"/>
    </location>
</feature>
<feature type="helix" evidence="20">
    <location>
        <begin position="222"/>
        <end position="224"/>
    </location>
</feature>
<feature type="strand" evidence="20">
    <location>
        <begin position="227"/>
        <end position="231"/>
    </location>
</feature>
<feature type="strand" evidence="20">
    <location>
        <begin position="234"/>
        <end position="236"/>
    </location>
</feature>
<feature type="strand" evidence="20">
    <location>
        <begin position="239"/>
        <end position="242"/>
    </location>
</feature>
<feature type="turn" evidence="20">
    <location>
        <begin position="243"/>
        <end position="246"/>
    </location>
</feature>
<feature type="strand" evidence="22">
    <location>
        <begin position="262"/>
        <end position="264"/>
    </location>
</feature>
<feature type="strand" evidence="20">
    <location>
        <begin position="266"/>
        <end position="268"/>
    </location>
</feature>
<feature type="helix" evidence="20">
    <location>
        <begin position="271"/>
        <end position="273"/>
    </location>
</feature>
<feature type="strand" evidence="20">
    <location>
        <begin position="277"/>
        <end position="287"/>
    </location>
</feature>
<feature type="strand" evidence="20">
    <location>
        <begin position="290"/>
        <end position="296"/>
    </location>
</feature>
<feature type="helix" evidence="20">
    <location>
        <begin position="299"/>
        <end position="302"/>
    </location>
</feature>
<feature type="strand" evidence="21">
    <location>
        <begin position="303"/>
        <end position="305"/>
    </location>
</feature>
<feature type="helix" evidence="20">
    <location>
        <begin position="307"/>
        <end position="311"/>
    </location>
</feature>
<feature type="turn" evidence="20">
    <location>
        <begin position="313"/>
        <end position="316"/>
    </location>
</feature>
<feature type="strand" evidence="20">
    <location>
        <begin position="323"/>
        <end position="325"/>
    </location>
</feature>
<feature type="turn" evidence="20">
    <location>
        <begin position="327"/>
        <end position="332"/>
    </location>
</feature>
<feature type="strand" evidence="20">
    <location>
        <begin position="335"/>
        <end position="338"/>
    </location>
</feature>
<feature type="helix" evidence="20">
    <location>
        <begin position="340"/>
        <end position="342"/>
    </location>
</feature>
<feature type="helix" evidence="20">
    <location>
        <begin position="347"/>
        <end position="352"/>
    </location>
</feature>
<feature type="helix" evidence="20">
    <location>
        <begin position="360"/>
        <end position="363"/>
    </location>
</feature>
<feature type="strand" evidence="20">
    <location>
        <begin position="366"/>
        <end position="370"/>
    </location>
</feature>
<feature type="turn" evidence="20">
    <location>
        <begin position="371"/>
        <end position="374"/>
    </location>
</feature>
<feature type="strand" evidence="20">
    <location>
        <begin position="375"/>
        <end position="389"/>
    </location>
</feature>
<feature type="helix" evidence="20">
    <location>
        <begin position="396"/>
        <end position="398"/>
    </location>
</feature>
<feature type="strand" evidence="20">
    <location>
        <begin position="404"/>
        <end position="416"/>
    </location>
</feature>
<feature type="helix" evidence="20">
    <location>
        <begin position="419"/>
        <end position="428"/>
    </location>
</feature>
<evidence type="ECO:0000255" key="1"/>
<evidence type="ECO:0000269" key="2">
    <source>
    </source>
</evidence>
<evidence type="ECO:0000269" key="3">
    <source>
    </source>
</evidence>
<evidence type="ECO:0000269" key="4">
    <source>
    </source>
</evidence>
<evidence type="ECO:0000269" key="5">
    <source>
    </source>
</evidence>
<evidence type="ECO:0000269" key="6">
    <source>
    </source>
</evidence>
<evidence type="ECO:0000269" key="7">
    <source>
    </source>
</evidence>
<evidence type="ECO:0000269" key="8">
    <source>
    </source>
</evidence>
<evidence type="ECO:0000269" key="9">
    <source>
    </source>
</evidence>
<evidence type="ECO:0000269" key="10">
    <source>
    </source>
</evidence>
<evidence type="ECO:0000269" key="11">
    <source>
    </source>
</evidence>
<evidence type="ECO:0000269" key="12">
    <source>
    </source>
</evidence>
<evidence type="ECO:0000269" key="13">
    <source>
    </source>
</evidence>
<evidence type="ECO:0000269" key="14">
    <source>
    </source>
</evidence>
<evidence type="ECO:0000269" key="15">
    <source>
    </source>
</evidence>
<evidence type="ECO:0000303" key="16">
    <source>
    </source>
</evidence>
<evidence type="ECO:0000305" key="17"/>
<evidence type="ECO:0007744" key="18">
    <source>
        <dbReference type="PDB" id="6I2K"/>
    </source>
</evidence>
<evidence type="ECO:0007829" key="19">
    <source>
        <dbReference type="PDB" id="4F7B"/>
    </source>
</evidence>
<evidence type="ECO:0007829" key="20">
    <source>
        <dbReference type="PDB" id="4Q4F"/>
    </source>
</evidence>
<evidence type="ECO:0007829" key="21">
    <source>
        <dbReference type="PDB" id="4TW2"/>
    </source>
</evidence>
<evidence type="ECO:0007829" key="22">
    <source>
        <dbReference type="PDB" id="6I2K"/>
    </source>
</evidence>